<comment type="function">
    <text evidence="1">Produces ATP from ADP in the presence of a proton gradient across the membrane. The gamma chain is believed to be important in regulating ATPase activity and the flow of protons through the CF(0) complex.</text>
</comment>
<comment type="subunit">
    <text evidence="1">F-type ATPases have 2 components, CF(1) - the catalytic core - and CF(0) - the membrane proton channel. CF(1) has five subunits: alpha(3), beta(3), gamma(1), delta(1), epsilon(1). CF(0) has three main subunits: a, b and c.</text>
</comment>
<comment type="subcellular location">
    <subcellularLocation>
        <location evidence="1">Cell membrane</location>
        <topology evidence="1">Peripheral membrane protein</topology>
    </subcellularLocation>
</comment>
<comment type="similarity">
    <text evidence="1">Belongs to the ATPase gamma chain family.</text>
</comment>
<gene>
    <name evidence="1" type="primary">atpG</name>
    <name type="ordered locus">Franean1_1023</name>
</gene>
<feature type="chain" id="PRO_1000134154" description="ATP synthase gamma chain">
    <location>
        <begin position="1"/>
        <end position="298"/>
    </location>
</feature>
<accession>A8L3W4</accession>
<name>ATPG_PARS2</name>
<evidence type="ECO:0000255" key="1">
    <source>
        <dbReference type="HAMAP-Rule" id="MF_00815"/>
    </source>
</evidence>
<keyword id="KW-0066">ATP synthesis</keyword>
<keyword id="KW-1003">Cell membrane</keyword>
<keyword id="KW-0139">CF(1)</keyword>
<keyword id="KW-0375">Hydrogen ion transport</keyword>
<keyword id="KW-0406">Ion transport</keyword>
<keyword id="KW-0472">Membrane</keyword>
<keyword id="KW-0813">Transport</keyword>
<dbReference type="EMBL" id="CP000820">
    <property type="protein sequence ID" value="ABW10479.1"/>
    <property type="molecule type" value="Genomic_DNA"/>
</dbReference>
<dbReference type="RefSeq" id="WP_020458661.1">
    <property type="nucleotide sequence ID" value="NC_009921.1"/>
</dbReference>
<dbReference type="SMR" id="A8L3W4"/>
<dbReference type="STRING" id="298653.Franean1_1023"/>
<dbReference type="KEGG" id="fre:Franean1_1023"/>
<dbReference type="eggNOG" id="COG0224">
    <property type="taxonomic scope" value="Bacteria"/>
</dbReference>
<dbReference type="HOGENOM" id="CLU_050669_0_0_11"/>
<dbReference type="GO" id="GO:0005886">
    <property type="term" value="C:plasma membrane"/>
    <property type="evidence" value="ECO:0007669"/>
    <property type="project" value="UniProtKB-SubCell"/>
</dbReference>
<dbReference type="GO" id="GO:0045259">
    <property type="term" value="C:proton-transporting ATP synthase complex"/>
    <property type="evidence" value="ECO:0007669"/>
    <property type="project" value="UniProtKB-KW"/>
</dbReference>
<dbReference type="GO" id="GO:0005524">
    <property type="term" value="F:ATP binding"/>
    <property type="evidence" value="ECO:0007669"/>
    <property type="project" value="UniProtKB-UniRule"/>
</dbReference>
<dbReference type="GO" id="GO:0046933">
    <property type="term" value="F:proton-transporting ATP synthase activity, rotational mechanism"/>
    <property type="evidence" value="ECO:0007669"/>
    <property type="project" value="UniProtKB-UniRule"/>
</dbReference>
<dbReference type="GO" id="GO:0042777">
    <property type="term" value="P:proton motive force-driven plasma membrane ATP synthesis"/>
    <property type="evidence" value="ECO:0007669"/>
    <property type="project" value="UniProtKB-UniRule"/>
</dbReference>
<dbReference type="CDD" id="cd12151">
    <property type="entry name" value="F1-ATPase_gamma"/>
    <property type="match status" value="1"/>
</dbReference>
<dbReference type="Gene3D" id="3.40.1380.10">
    <property type="match status" value="1"/>
</dbReference>
<dbReference type="Gene3D" id="1.10.287.80">
    <property type="entry name" value="ATP synthase, gamma subunit, helix hairpin domain"/>
    <property type="match status" value="1"/>
</dbReference>
<dbReference type="HAMAP" id="MF_00815">
    <property type="entry name" value="ATP_synth_gamma_bact"/>
    <property type="match status" value="1"/>
</dbReference>
<dbReference type="InterPro" id="IPR035968">
    <property type="entry name" value="ATP_synth_F1_ATPase_gsu"/>
</dbReference>
<dbReference type="InterPro" id="IPR000131">
    <property type="entry name" value="ATP_synth_F1_gsu"/>
</dbReference>
<dbReference type="InterPro" id="IPR023632">
    <property type="entry name" value="ATP_synth_F1_gsu_CS"/>
</dbReference>
<dbReference type="NCBIfam" id="TIGR01146">
    <property type="entry name" value="ATPsyn_F1gamma"/>
    <property type="match status" value="1"/>
</dbReference>
<dbReference type="NCBIfam" id="NF004145">
    <property type="entry name" value="PRK05621.1-2"/>
    <property type="match status" value="1"/>
</dbReference>
<dbReference type="PANTHER" id="PTHR11693">
    <property type="entry name" value="ATP SYNTHASE GAMMA CHAIN"/>
    <property type="match status" value="1"/>
</dbReference>
<dbReference type="PANTHER" id="PTHR11693:SF22">
    <property type="entry name" value="ATP SYNTHASE SUBUNIT GAMMA, MITOCHONDRIAL"/>
    <property type="match status" value="1"/>
</dbReference>
<dbReference type="Pfam" id="PF00231">
    <property type="entry name" value="ATP-synt"/>
    <property type="match status" value="1"/>
</dbReference>
<dbReference type="PRINTS" id="PR00126">
    <property type="entry name" value="ATPASEGAMMA"/>
</dbReference>
<dbReference type="SUPFAM" id="SSF52943">
    <property type="entry name" value="ATP synthase (F1-ATPase), gamma subunit"/>
    <property type="match status" value="1"/>
</dbReference>
<dbReference type="PROSITE" id="PS00153">
    <property type="entry name" value="ATPASE_GAMMA"/>
    <property type="match status" value="1"/>
</dbReference>
<protein>
    <recommendedName>
        <fullName evidence="1">ATP synthase gamma chain</fullName>
    </recommendedName>
    <alternativeName>
        <fullName evidence="1">ATP synthase F1 sector gamma subunit</fullName>
    </alternativeName>
    <alternativeName>
        <fullName evidence="1">F-ATPase gamma subunit</fullName>
    </alternativeName>
</protein>
<proteinExistence type="inferred from homology"/>
<organism>
    <name type="scientific">Parafrankia sp. (strain EAN1pec)</name>
    <dbReference type="NCBI Taxonomy" id="298653"/>
    <lineage>
        <taxon>Bacteria</taxon>
        <taxon>Bacillati</taxon>
        <taxon>Actinomycetota</taxon>
        <taxon>Actinomycetes</taxon>
        <taxon>Frankiales</taxon>
        <taxon>Frankiaceae</taxon>
        <taxon>Parafrankia</taxon>
    </lineage>
</organism>
<sequence>MAGQLREYRRRIKTVQSTKKITKAMELIAASRIAKARARVAASRPYAEEITRVISAVASQTTIAHPLTTERPEPTRAAVVVITSDRGLAGGYSSNALKRAGELVELLREEGKEPLLYAVGRKAGTYYRFRGRPLAGDYTGFSEQPSYSDAKAVADALITAFTTPTEEGGVDEIHLVFTEYVSAMTQNAVAHRLLPMVLREHDEPPAGGPLPNYEFEPSAEAVLDALLPRYVESRLYAALLESAASESAARQRAMKSATDNAEDLIKTYTRAANRARQDAITQEISEIVGGANALASGA</sequence>
<reference key="1">
    <citation type="journal article" date="2007" name="Genome Res.">
        <title>Genome characteristics of facultatively symbiotic Frankia sp. strains reflect host range and host plant biogeography.</title>
        <authorList>
            <person name="Normand P."/>
            <person name="Lapierre P."/>
            <person name="Tisa L.S."/>
            <person name="Gogarten J.P."/>
            <person name="Alloisio N."/>
            <person name="Bagnarol E."/>
            <person name="Bassi C.A."/>
            <person name="Berry A.M."/>
            <person name="Bickhart D.M."/>
            <person name="Choisne N."/>
            <person name="Couloux A."/>
            <person name="Cournoyer B."/>
            <person name="Cruveiller S."/>
            <person name="Daubin V."/>
            <person name="Demange N."/>
            <person name="Francino M.P."/>
            <person name="Goltsman E."/>
            <person name="Huang Y."/>
            <person name="Kopp O.R."/>
            <person name="Labarre L."/>
            <person name="Lapidus A."/>
            <person name="Lavire C."/>
            <person name="Marechal J."/>
            <person name="Martinez M."/>
            <person name="Mastronunzio J.E."/>
            <person name="Mullin B.C."/>
            <person name="Niemann J."/>
            <person name="Pujic P."/>
            <person name="Rawnsley T."/>
            <person name="Rouy Z."/>
            <person name="Schenowitz C."/>
            <person name="Sellstedt A."/>
            <person name="Tavares F."/>
            <person name="Tomkins J.P."/>
            <person name="Vallenet D."/>
            <person name="Valverde C."/>
            <person name="Wall L.G."/>
            <person name="Wang Y."/>
            <person name="Medigue C."/>
            <person name="Benson D.R."/>
        </authorList>
    </citation>
    <scope>NUCLEOTIDE SEQUENCE [LARGE SCALE GENOMIC DNA]</scope>
    <source>
        <strain>EAN1pec</strain>
    </source>
</reference>